<name>PSBL_SPIOL</name>
<protein>
    <recommendedName>
        <fullName evidence="2">Photosystem II reaction center protein L</fullName>
        <shortName evidence="2">PSII-L</shortName>
    </recommendedName>
</protein>
<dbReference type="EMBL" id="X70699">
    <property type="protein sequence ID" value="CAA50030.1"/>
    <property type="status" value="ALT_SEQ"/>
    <property type="molecule type" value="Genomic_DNA"/>
</dbReference>
<dbReference type="EMBL" id="AJ400848">
    <property type="protein sequence ID" value="CAB91048.1"/>
    <property type="molecule type" value="Genomic_DNA"/>
</dbReference>
<dbReference type="EMBL" id="M35673">
    <property type="status" value="NOT_ANNOTATED_CDS"/>
    <property type="molecule type" value="Genomic_DNA"/>
</dbReference>
<dbReference type="PIR" id="S31821">
    <property type="entry name" value="S31821"/>
</dbReference>
<dbReference type="RefSeq" id="NP_077749.1">
    <property type="nucleotide sequence ID" value="NC_002202.1"/>
</dbReference>
<dbReference type="PDB" id="3JCU">
    <property type="method" value="EM"/>
    <property type="resolution" value="3.20 A"/>
    <property type="chains" value="L/l=1-38"/>
</dbReference>
<dbReference type="PDB" id="8Z9D">
    <property type="method" value="EM"/>
    <property type="resolution" value="3.22 A"/>
    <property type="chains" value="L/LL/Ll/l=1-38"/>
</dbReference>
<dbReference type="PDBsum" id="3JCU"/>
<dbReference type="PDBsum" id="8Z9D"/>
<dbReference type="EMDB" id="EMD-39860"/>
<dbReference type="SMR" id="P60150"/>
<dbReference type="DIP" id="DIP-62018N"/>
<dbReference type="FunCoup" id="P60150">
    <property type="interactions" value="78"/>
</dbReference>
<dbReference type="IntAct" id="P60150">
    <property type="interactions" value="1"/>
</dbReference>
<dbReference type="STRING" id="3562.P60150"/>
<dbReference type="GeneID" id="2715617"/>
<dbReference type="KEGG" id="soe:2715617"/>
<dbReference type="InParanoid" id="P60150"/>
<dbReference type="OrthoDB" id="99at2759"/>
<dbReference type="Proteomes" id="UP001155700">
    <property type="component" value="Chloroplast Pltd"/>
</dbReference>
<dbReference type="GO" id="GO:0009535">
    <property type="term" value="C:chloroplast thylakoid membrane"/>
    <property type="evidence" value="ECO:0007669"/>
    <property type="project" value="UniProtKB-SubCell"/>
</dbReference>
<dbReference type="GO" id="GO:0009539">
    <property type="term" value="C:photosystem II reaction center"/>
    <property type="evidence" value="ECO:0007669"/>
    <property type="project" value="InterPro"/>
</dbReference>
<dbReference type="GO" id="GO:0015979">
    <property type="term" value="P:photosynthesis"/>
    <property type="evidence" value="ECO:0007669"/>
    <property type="project" value="UniProtKB-UniRule"/>
</dbReference>
<dbReference type="HAMAP" id="MF_01317">
    <property type="entry name" value="PSII_PsbL"/>
    <property type="match status" value="1"/>
</dbReference>
<dbReference type="InterPro" id="IPR003372">
    <property type="entry name" value="PSII_PsbL"/>
</dbReference>
<dbReference type="InterPro" id="IPR037266">
    <property type="entry name" value="PSII_PsbL_sf"/>
</dbReference>
<dbReference type="NCBIfam" id="NF001972">
    <property type="entry name" value="PRK00753.1"/>
    <property type="match status" value="1"/>
</dbReference>
<dbReference type="Pfam" id="PF02419">
    <property type="entry name" value="PsbL"/>
    <property type="match status" value="1"/>
</dbReference>
<dbReference type="SUPFAM" id="SSF161017">
    <property type="entry name" value="Photosystem II reaction center protein L, PsbL"/>
    <property type="match status" value="1"/>
</dbReference>
<organism>
    <name type="scientific">Spinacia oleracea</name>
    <name type="common">Spinach</name>
    <dbReference type="NCBI Taxonomy" id="3562"/>
    <lineage>
        <taxon>Eukaryota</taxon>
        <taxon>Viridiplantae</taxon>
        <taxon>Streptophyta</taxon>
        <taxon>Embryophyta</taxon>
        <taxon>Tracheophyta</taxon>
        <taxon>Spermatophyta</taxon>
        <taxon>Magnoliopsida</taxon>
        <taxon>eudicotyledons</taxon>
        <taxon>Gunneridae</taxon>
        <taxon>Pentapetalae</taxon>
        <taxon>Caryophyllales</taxon>
        <taxon>Chenopodiaceae</taxon>
        <taxon>Chenopodioideae</taxon>
        <taxon>Anserineae</taxon>
        <taxon>Spinacia</taxon>
    </lineage>
</organism>
<keyword id="KW-0002">3D-structure</keyword>
<keyword id="KW-0150">Chloroplast</keyword>
<keyword id="KW-0903">Direct protein sequencing</keyword>
<keyword id="KW-0472">Membrane</keyword>
<keyword id="KW-0602">Photosynthesis</keyword>
<keyword id="KW-0604">Photosystem II</keyword>
<keyword id="KW-0934">Plastid</keyword>
<keyword id="KW-0674">Reaction center</keyword>
<keyword id="KW-1185">Reference proteome</keyword>
<keyword id="KW-0691">RNA editing</keyword>
<keyword id="KW-0793">Thylakoid</keyword>
<keyword id="KW-0812">Transmembrane</keyword>
<keyword id="KW-1133">Transmembrane helix</keyword>
<sequence length="38" mass="4497">MTQSNPNEQNVELNRTSLYWGLLLIFVLAVLFSNYFFN</sequence>
<gene>
    <name evidence="2" type="primary">psbL</name>
</gene>
<comment type="function">
    <text evidence="2 4 6">One of the components of the core complex of photosystem II (PSII). PSII is a light-driven water:plastoquinone oxidoreductase that uses light energy to abstract electrons from H(2)O, generating O(2) and a proton gradient subsequently used for ATP formation. It consists of a core antenna complex that captures photons, and an electron transfer chain that converts photonic excitation into a charge separation. This subunit is found at the monomer-monomer interface and is required for correct PSII assembly and/or dimerization (By similarity). Probably involved in PSII assembly (PubMed:7957890). May be involved in PSII dimerization (PubMed:9632665).</text>
</comment>
<comment type="subunit">
    <text evidence="2">PSII is composed of 1 copy each of membrane proteins PsbA, PsbB, PsbC, PsbD, PsbE, PsbF, PsbH, PsbI, PsbJ, PsbK, PsbL, PsbM, PsbT, PsbX, PsbY, PsbZ, Psb30/Ycf12, at least 3 peripheral proteins of the oxygen-evolving complex and a large number of cofactors. It forms dimeric complexes.</text>
</comment>
<comment type="subcellular location">
    <subcellularLocation>
        <location evidence="2 6">Plastid</location>
        <location evidence="2 6">Chloroplast thylakoid membrane</location>
        <topology evidence="1 2">Single-pass membrane protein</topology>
    </subcellularLocation>
</comment>
<comment type="RNA editing">
    <location>
        <position position="1" evidence="5"/>
    </location>
    <text>The initiator methionine is created by RNA editing.</text>
</comment>
<comment type="mass spectrometry" mass="4365.5" method="MALDI" evidence="6"/>
<comment type="similarity">
    <text evidence="2">Belongs to the PsbL family.</text>
</comment>
<reference key="1">
    <citation type="journal article" date="1993" name="Mol. Gen. Genet.">
        <title>Tissue- and stage-specific modulation of RNA editing of the psbF and psbL transcript from spinach plastids -- a new regulatory mechanism?</title>
        <authorList>
            <person name="Bock R."/>
            <person name="Hagemann R."/>
            <person name="Koessel H."/>
            <person name="Kudla J."/>
        </authorList>
    </citation>
    <scope>NUCLEOTIDE SEQUENCE [GENOMIC DNA]</scope>
    <scope>RNA EDITING OF INITIATOR CODON</scope>
    <source>
        <strain>cv. Matador</strain>
        <tissue>Leaf</tissue>
    </source>
</reference>
<reference key="2">
    <citation type="journal article" date="2001" name="Plant Mol. Biol.">
        <title>The plastid chromosome of spinach (Spinacia oleracea): complete nucleotide sequence and gene organization.</title>
        <authorList>
            <person name="Schmitz-Linneweber C."/>
            <person name="Maier R.M."/>
            <person name="Alcaraz J.-P."/>
            <person name="Cottet A."/>
            <person name="Herrmann R.G."/>
            <person name="Mache R."/>
        </authorList>
    </citation>
    <scope>NUCLEOTIDE SEQUENCE [LARGE SCALE GENOMIC DNA]</scope>
    <source>
        <strain>cv. Geant d'hiver</strain>
        <strain>cv. Monatol</strain>
    </source>
</reference>
<reference key="3">
    <citation type="journal article" date="1998" name="J. Biol. Chem.">
        <title>Isolation and characterization of monomeric and dimeric CP47-reaction center photosystem II complexes.</title>
        <authorList>
            <person name="Zheleva D."/>
            <person name="Sharma J."/>
            <person name="Panico M."/>
            <person name="Morris H.R."/>
            <person name="Barber J."/>
        </authorList>
    </citation>
    <scope>PROTEIN SEQUENCE OF 2-4</scope>
    <scope>FUNCTION</scope>
    <scope>SUBUNIT</scope>
    <scope>SUBCELLULAR LOCATION</scope>
    <scope>MASS SPECTROMETRY</scope>
</reference>
<reference key="4">
    <citation type="journal article" date="1984" name="FEBS Lett.">
        <title>Nucleotide sequence of the gene for apocytochrome b-559 on the spinach plastid chromosome: implications for the structure of the membrane protein.</title>
        <authorList>
            <person name="Hermann R.G."/>
            <person name="Alt J."/>
            <person name="Schiller B."/>
            <person name="Widger W.R."/>
            <person name="Cramer W.A."/>
        </authorList>
    </citation>
    <scope>NUCLEOTIDE SEQUENCE [GENOMIC DNA] OF 1-13</scope>
</reference>
<reference key="5">
    <citation type="journal article" date="1989" name="FEBS Lett.">
        <title>N-terminal sequencing of photosystem II low-molecular-mass proteins. 5 and 4.1 kDa components of the O2-evolving core complex from higher plants.</title>
        <authorList>
            <person name="Ikeuchi M."/>
            <person name="Takio K."/>
            <person name="Inoue Y."/>
        </authorList>
    </citation>
    <scope>PROTEIN SEQUENCE OF 2-16</scope>
</reference>
<reference key="6">
    <citation type="journal article" date="1994" name="FEBS Lett.">
        <title>L protein, encoded by psbL, restores normal functioning of the primary quinone acceptor, QA, in isolated D1/D2/CP47/Cytb-559/I photosystem II reaction center core complex.</title>
        <authorList>
            <person name="Kitamura K."/>
            <person name="Ozawa S."/>
            <person name="Shiina T."/>
            <person name="Toyoshima Y."/>
        </authorList>
    </citation>
    <scope>FUNCTION</scope>
</reference>
<accession>P60150</accession>
<accession>O47030</accession>
<accession>P12166</accession>
<accession>P12167</accession>
<accession>Q34007</accession>
<proteinExistence type="evidence at protein level"/>
<geneLocation type="chloroplast"/>
<evidence type="ECO:0000250" key="1"/>
<evidence type="ECO:0000255" key="2">
    <source>
        <dbReference type="HAMAP-Rule" id="MF_01317"/>
    </source>
</evidence>
<evidence type="ECO:0000269" key="3">
    <source>
    </source>
</evidence>
<evidence type="ECO:0000269" key="4">
    <source>
    </source>
</evidence>
<evidence type="ECO:0000269" key="5">
    <source>
    </source>
</evidence>
<evidence type="ECO:0000269" key="6">
    <source>
    </source>
</evidence>
<evidence type="ECO:0007829" key="7">
    <source>
        <dbReference type="PDB" id="3JCU"/>
    </source>
</evidence>
<feature type="initiator methionine" description="Removed" evidence="3 6">
    <location>
        <position position="1"/>
    </location>
</feature>
<feature type="chain" id="PRO_0000219773" description="Photosystem II reaction center protein L">
    <location>
        <begin position="2"/>
        <end position="38"/>
    </location>
</feature>
<feature type="transmembrane region" description="Helical" evidence="2">
    <location>
        <begin position="17"/>
        <end position="37"/>
    </location>
</feature>
<feature type="helix" evidence="7">
    <location>
        <begin position="15"/>
        <end position="37"/>
    </location>
</feature>